<gene>
    <name evidence="1" type="primary">folD</name>
    <name type="ordered locus">CYB_0090</name>
</gene>
<evidence type="ECO:0000255" key="1">
    <source>
        <dbReference type="HAMAP-Rule" id="MF_01576"/>
    </source>
</evidence>
<dbReference type="EC" id="1.5.1.5" evidence="1"/>
<dbReference type="EC" id="3.5.4.9" evidence="1"/>
<dbReference type="EMBL" id="CP000240">
    <property type="protein sequence ID" value="ABD01091.1"/>
    <property type="molecule type" value="Genomic_DNA"/>
</dbReference>
<dbReference type="RefSeq" id="WP_011431762.1">
    <property type="nucleotide sequence ID" value="NC_007776.1"/>
</dbReference>
<dbReference type="SMR" id="Q2JQ25"/>
<dbReference type="STRING" id="321332.CYB_0090"/>
<dbReference type="KEGG" id="cyb:CYB_0090"/>
<dbReference type="eggNOG" id="COG0190">
    <property type="taxonomic scope" value="Bacteria"/>
</dbReference>
<dbReference type="HOGENOM" id="CLU_034045_2_1_3"/>
<dbReference type="OrthoDB" id="9803580at2"/>
<dbReference type="UniPathway" id="UPA00193"/>
<dbReference type="Proteomes" id="UP000001938">
    <property type="component" value="Chromosome"/>
</dbReference>
<dbReference type="GO" id="GO:0005829">
    <property type="term" value="C:cytosol"/>
    <property type="evidence" value="ECO:0007669"/>
    <property type="project" value="TreeGrafter"/>
</dbReference>
<dbReference type="GO" id="GO:0004477">
    <property type="term" value="F:methenyltetrahydrofolate cyclohydrolase activity"/>
    <property type="evidence" value="ECO:0007669"/>
    <property type="project" value="UniProtKB-UniRule"/>
</dbReference>
<dbReference type="GO" id="GO:0004488">
    <property type="term" value="F:methylenetetrahydrofolate dehydrogenase (NADP+) activity"/>
    <property type="evidence" value="ECO:0007669"/>
    <property type="project" value="UniProtKB-UniRule"/>
</dbReference>
<dbReference type="GO" id="GO:0000105">
    <property type="term" value="P:L-histidine biosynthetic process"/>
    <property type="evidence" value="ECO:0007669"/>
    <property type="project" value="UniProtKB-KW"/>
</dbReference>
<dbReference type="GO" id="GO:0009086">
    <property type="term" value="P:methionine biosynthetic process"/>
    <property type="evidence" value="ECO:0007669"/>
    <property type="project" value="UniProtKB-KW"/>
</dbReference>
<dbReference type="GO" id="GO:0006164">
    <property type="term" value="P:purine nucleotide biosynthetic process"/>
    <property type="evidence" value="ECO:0007669"/>
    <property type="project" value="UniProtKB-KW"/>
</dbReference>
<dbReference type="GO" id="GO:0035999">
    <property type="term" value="P:tetrahydrofolate interconversion"/>
    <property type="evidence" value="ECO:0007669"/>
    <property type="project" value="UniProtKB-UniRule"/>
</dbReference>
<dbReference type="CDD" id="cd01080">
    <property type="entry name" value="NAD_bind_m-THF_DH_Cyclohyd"/>
    <property type="match status" value="1"/>
</dbReference>
<dbReference type="FunFam" id="3.40.50.720:FF:000094">
    <property type="entry name" value="Bifunctional protein FolD"/>
    <property type="match status" value="1"/>
</dbReference>
<dbReference type="FunFam" id="3.40.50.10860:FF:000005">
    <property type="entry name" value="C-1-tetrahydrofolate synthase, cytoplasmic, putative"/>
    <property type="match status" value="1"/>
</dbReference>
<dbReference type="Gene3D" id="3.40.50.10860">
    <property type="entry name" value="Leucine Dehydrogenase, chain A, domain 1"/>
    <property type="match status" value="1"/>
</dbReference>
<dbReference type="Gene3D" id="3.40.50.720">
    <property type="entry name" value="NAD(P)-binding Rossmann-like Domain"/>
    <property type="match status" value="1"/>
</dbReference>
<dbReference type="HAMAP" id="MF_01576">
    <property type="entry name" value="THF_DHG_CYH"/>
    <property type="match status" value="1"/>
</dbReference>
<dbReference type="InterPro" id="IPR046346">
    <property type="entry name" value="Aminoacid_DH-like_N_sf"/>
</dbReference>
<dbReference type="InterPro" id="IPR036291">
    <property type="entry name" value="NAD(P)-bd_dom_sf"/>
</dbReference>
<dbReference type="InterPro" id="IPR000672">
    <property type="entry name" value="THF_DH/CycHdrlase"/>
</dbReference>
<dbReference type="InterPro" id="IPR020630">
    <property type="entry name" value="THF_DH/CycHdrlase_cat_dom"/>
</dbReference>
<dbReference type="InterPro" id="IPR020867">
    <property type="entry name" value="THF_DH/CycHdrlase_CS"/>
</dbReference>
<dbReference type="InterPro" id="IPR020631">
    <property type="entry name" value="THF_DH/CycHdrlase_NAD-bd_dom"/>
</dbReference>
<dbReference type="NCBIfam" id="NF010783">
    <property type="entry name" value="PRK14186.1"/>
    <property type="match status" value="1"/>
</dbReference>
<dbReference type="PANTHER" id="PTHR48099:SF5">
    <property type="entry name" value="C-1-TETRAHYDROFOLATE SYNTHASE, CYTOPLASMIC"/>
    <property type="match status" value="1"/>
</dbReference>
<dbReference type="PANTHER" id="PTHR48099">
    <property type="entry name" value="C-1-TETRAHYDROFOLATE SYNTHASE, CYTOPLASMIC-RELATED"/>
    <property type="match status" value="1"/>
</dbReference>
<dbReference type="Pfam" id="PF00763">
    <property type="entry name" value="THF_DHG_CYH"/>
    <property type="match status" value="1"/>
</dbReference>
<dbReference type="Pfam" id="PF02882">
    <property type="entry name" value="THF_DHG_CYH_C"/>
    <property type="match status" value="1"/>
</dbReference>
<dbReference type="PRINTS" id="PR00085">
    <property type="entry name" value="THFDHDRGNASE"/>
</dbReference>
<dbReference type="SUPFAM" id="SSF53223">
    <property type="entry name" value="Aminoacid dehydrogenase-like, N-terminal domain"/>
    <property type="match status" value="1"/>
</dbReference>
<dbReference type="SUPFAM" id="SSF51735">
    <property type="entry name" value="NAD(P)-binding Rossmann-fold domains"/>
    <property type="match status" value="1"/>
</dbReference>
<dbReference type="PROSITE" id="PS00767">
    <property type="entry name" value="THF_DHG_CYH_2"/>
    <property type="match status" value="1"/>
</dbReference>
<keyword id="KW-0028">Amino-acid biosynthesis</keyword>
<keyword id="KW-0368">Histidine biosynthesis</keyword>
<keyword id="KW-0378">Hydrolase</keyword>
<keyword id="KW-0486">Methionine biosynthesis</keyword>
<keyword id="KW-0511">Multifunctional enzyme</keyword>
<keyword id="KW-0521">NADP</keyword>
<keyword id="KW-0554">One-carbon metabolism</keyword>
<keyword id="KW-0560">Oxidoreductase</keyword>
<keyword id="KW-0658">Purine biosynthesis</keyword>
<keyword id="KW-1185">Reference proteome</keyword>
<feature type="chain" id="PRO_0000268534" description="Bifunctional protein FolD">
    <location>
        <begin position="1"/>
        <end position="293"/>
    </location>
</feature>
<feature type="binding site" evidence="1">
    <location>
        <begin position="166"/>
        <end position="168"/>
    </location>
    <ligand>
        <name>NADP(+)</name>
        <dbReference type="ChEBI" id="CHEBI:58349"/>
    </ligand>
</feature>
<feature type="binding site" evidence="1">
    <location>
        <position position="191"/>
    </location>
    <ligand>
        <name>NADP(+)</name>
        <dbReference type="ChEBI" id="CHEBI:58349"/>
    </ligand>
</feature>
<feature type="binding site" evidence="1">
    <location>
        <position position="232"/>
    </location>
    <ligand>
        <name>NADP(+)</name>
        <dbReference type="ChEBI" id="CHEBI:58349"/>
    </ligand>
</feature>
<sequence length="293" mass="31081">MPAKILDGKALAARLQAEMAAQVQAWIPQVGRPPGLAVLRVGEDPASAAYVRGKERACERLGIASFGRHFSAQDSPAHLLDTIDQLNQDERVDGILVQLPLPPGWDPIPPLLAINPDKDVDGLHPLNLGRLLRGEPGLRSCTPLGVMRLLQAEGIPIAGRKAVVVGRSILVGKPLSLMLLAADATVTLAHSRTPDLAEVTRAADIVVMAVGRPRLLRADMVKPGAVVIDVGINRIETPTGAEQLVGDVDYEAVKELAAAITPVPGGVGPMTVTMLLANTLQSYKLRSHLCSHY</sequence>
<protein>
    <recommendedName>
        <fullName evidence="1">Bifunctional protein FolD</fullName>
    </recommendedName>
    <domain>
        <recommendedName>
            <fullName evidence="1">Methylenetetrahydrofolate dehydrogenase</fullName>
            <ecNumber evidence="1">1.5.1.5</ecNumber>
        </recommendedName>
    </domain>
    <domain>
        <recommendedName>
            <fullName evidence="1">Methenyltetrahydrofolate cyclohydrolase</fullName>
            <ecNumber evidence="1">3.5.4.9</ecNumber>
        </recommendedName>
    </domain>
</protein>
<name>FOLD_SYNJB</name>
<accession>Q2JQ25</accession>
<organism>
    <name type="scientific">Synechococcus sp. (strain JA-2-3B'a(2-13))</name>
    <name type="common">Cyanobacteria bacterium Yellowstone B-Prime</name>
    <dbReference type="NCBI Taxonomy" id="321332"/>
    <lineage>
        <taxon>Bacteria</taxon>
        <taxon>Bacillati</taxon>
        <taxon>Cyanobacteriota</taxon>
        <taxon>Cyanophyceae</taxon>
        <taxon>Synechococcales</taxon>
        <taxon>Synechococcaceae</taxon>
        <taxon>Synechococcus</taxon>
    </lineage>
</organism>
<reference key="1">
    <citation type="journal article" date="2007" name="ISME J.">
        <title>Population level functional diversity in a microbial community revealed by comparative genomic and metagenomic analyses.</title>
        <authorList>
            <person name="Bhaya D."/>
            <person name="Grossman A.R."/>
            <person name="Steunou A.-S."/>
            <person name="Khuri N."/>
            <person name="Cohan F.M."/>
            <person name="Hamamura N."/>
            <person name="Melendrez M.C."/>
            <person name="Bateson M.M."/>
            <person name="Ward D.M."/>
            <person name="Heidelberg J.F."/>
        </authorList>
    </citation>
    <scope>NUCLEOTIDE SEQUENCE [LARGE SCALE GENOMIC DNA]</scope>
    <source>
        <strain>JA-2-3B'a(2-13)</strain>
    </source>
</reference>
<proteinExistence type="inferred from homology"/>
<comment type="function">
    <text evidence="1">Catalyzes the oxidation of 5,10-methylenetetrahydrofolate to 5,10-methenyltetrahydrofolate and then the hydrolysis of 5,10-methenyltetrahydrofolate to 10-formyltetrahydrofolate.</text>
</comment>
<comment type="catalytic activity">
    <reaction evidence="1">
        <text>(6R)-5,10-methylene-5,6,7,8-tetrahydrofolate + NADP(+) = (6R)-5,10-methenyltetrahydrofolate + NADPH</text>
        <dbReference type="Rhea" id="RHEA:22812"/>
        <dbReference type="ChEBI" id="CHEBI:15636"/>
        <dbReference type="ChEBI" id="CHEBI:57455"/>
        <dbReference type="ChEBI" id="CHEBI:57783"/>
        <dbReference type="ChEBI" id="CHEBI:58349"/>
        <dbReference type="EC" id="1.5.1.5"/>
    </reaction>
</comment>
<comment type="catalytic activity">
    <reaction evidence="1">
        <text>(6R)-5,10-methenyltetrahydrofolate + H2O = (6R)-10-formyltetrahydrofolate + H(+)</text>
        <dbReference type="Rhea" id="RHEA:23700"/>
        <dbReference type="ChEBI" id="CHEBI:15377"/>
        <dbReference type="ChEBI" id="CHEBI:15378"/>
        <dbReference type="ChEBI" id="CHEBI:57455"/>
        <dbReference type="ChEBI" id="CHEBI:195366"/>
        <dbReference type="EC" id="3.5.4.9"/>
    </reaction>
</comment>
<comment type="pathway">
    <text evidence="1">One-carbon metabolism; tetrahydrofolate interconversion.</text>
</comment>
<comment type="subunit">
    <text evidence="1">Homodimer.</text>
</comment>
<comment type="similarity">
    <text evidence="1">Belongs to the tetrahydrofolate dehydrogenase/cyclohydrolase family.</text>
</comment>